<evidence type="ECO:0000250" key="1"/>
<evidence type="ECO:0000305" key="2"/>
<protein>
    <recommendedName>
        <fullName>Phenylalanine--tRNA ligase alpha subunit</fullName>
        <ecNumber>6.1.1.20</ecNumber>
    </recommendedName>
    <alternativeName>
        <fullName>Phenylalanyl-tRNA synthetase alpha subunit</fullName>
        <shortName>PheRS</shortName>
    </alternativeName>
</protein>
<comment type="catalytic activity">
    <reaction>
        <text>tRNA(Phe) + L-phenylalanine + ATP = L-phenylalanyl-tRNA(Phe) + AMP + diphosphate + H(+)</text>
        <dbReference type="Rhea" id="RHEA:19413"/>
        <dbReference type="Rhea" id="RHEA-COMP:9668"/>
        <dbReference type="Rhea" id="RHEA-COMP:9699"/>
        <dbReference type="ChEBI" id="CHEBI:15378"/>
        <dbReference type="ChEBI" id="CHEBI:30616"/>
        <dbReference type="ChEBI" id="CHEBI:33019"/>
        <dbReference type="ChEBI" id="CHEBI:58095"/>
        <dbReference type="ChEBI" id="CHEBI:78442"/>
        <dbReference type="ChEBI" id="CHEBI:78531"/>
        <dbReference type="ChEBI" id="CHEBI:456215"/>
        <dbReference type="EC" id="6.1.1.20"/>
    </reaction>
</comment>
<comment type="cofactor">
    <cofactor evidence="1">
        <name>Mg(2+)</name>
        <dbReference type="ChEBI" id="CHEBI:18420"/>
    </cofactor>
    <text evidence="1">Binds 2 magnesium ions per tetramer.</text>
</comment>
<comment type="subunit">
    <text evidence="1">Tetramer of two alpha and two beta subunits.</text>
</comment>
<comment type="subcellular location">
    <subcellularLocation>
        <location evidence="1">Cytoplasm</location>
    </subcellularLocation>
</comment>
<comment type="similarity">
    <text evidence="2">Belongs to the class-II aminoacyl-tRNA synthetase family. Phe-tRNA synthetase alpha subunit type 1 subfamily.</text>
</comment>
<dbReference type="EC" id="6.1.1.20"/>
<dbReference type="EMBL" id="L43967">
    <property type="protein sequence ID" value="AAC71412.1"/>
    <property type="molecule type" value="Genomic_DNA"/>
</dbReference>
<dbReference type="EMBL" id="U02120">
    <property type="protein sequence ID" value="AAD12394.1"/>
    <property type="molecule type" value="Genomic_DNA"/>
</dbReference>
<dbReference type="EMBL" id="U01711">
    <property type="protein sequence ID" value="AAB01023.1"/>
    <property type="molecule type" value="Genomic_DNA"/>
</dbReference>
<dbReference type="PIR" id="D64221">
    <property type="entry name" value="D64221"/>
</dbReference>
<dbReference type="RefSeq" id="WP_010869368.1">
    <property type="nucleotide sequence ID" value="NC_000908.2"/>
</dbReference>
<dbReference type="SMR" id="P47436"/>
<dbReference type="FunCoup" id="P47436">
    <property type="interactions" value="195"/>
</dbReference>
<dbReference type="STRING" id="243273.MG_194"/>
<dbReference type="GeneID" id="88282326"/>
<dbReference type="KEGG" id="mge:MG_194"/>
<dbReference type="eggNOG" id="COG0016">
    <property type="taxonomic scope" value="Bacteria"/>
</dbReference>
<dbReference type="HOGENOM" id="CLU_025086_0_1_14"/>
<dbReference type="InParanoid" id="P47436"/>
<dbReference type="OrthoDB" id="9800719at2"/>
<dbReference type="BioCyc" id="MGEN243273:G1GJ2-226-MONOMER"/>
<dbReference type="Proteomes" id="UP000000807">
    <property type="component" value="Chromosome"/>
</dbReference>
<dbReference type="GO" id="GO:0005737">
    <property type="term" value="C:cytoplasm"/>
    <property type="evidence" value="ECO:0000318"/>
    <property type="project" value="GO_Central"/>
</dbReference>
<dbReference type="GO" id="GO:0005524">
    <property type="term" value="F:ATP binding"/>
    <property type="evidence" value="ECO:0007669"/>
    <property type="project" value="UniProtKB-UniRule"/>
</dbReference>
<dbReference type="GO" id="GO:0000287">
    <property type="term" value="F:magnesium ion binding"/>
    <property type="evidence" value="ECO:0007669"/>
    <property type="project" value="UniProtKB-UniRule"/>
</dbReference>
<dbReference type="GO" id="GO:0004826">
    <property type="term" value="F:phenylalanine-tRNA ligase activity"/>
    <property type="evidence" value="ECO:0000318"/>
    <property type="project" value="GO_Central"/>
</dbReference>
<dbReference type="GO" id="GO:0000049">
    <property type="term" value="F:tRNA binding"/>
    <property type="evidence" value="ECO:0007669"/>
    <property type="project" value="InterPro"/>
</dbReference>
<dbReference type="GO" id="GO:0006432">
    <property type="term" value="P:phenylalanyl-tRNA aminoacylation"/>
    <property type="evidence" value="ECO:0000318"/>
    <property type="project" value="GO_Central"/>
</dbReference>
<dbReference type="CDD" id="cd00496">
    <property type="entry name" value="PheRS_alpha_core"/>
    <property type="match status" value="1"/>
</dbReference>
<dbReference type="FunFam" id="3.30.930.10:FF:000089">
    <property type="entry name" value="Phenylalanine--tRNA ligase alpha subunit"/>
    <property type="match status" value="1"/>
</dbReference>
<dbReference type="Gene3D" id="3.30.930.10">
    <property type="entry name" value="Bira Bifunctional Protein, Domain 2"/>
    <property type="match status" value="1"/>
</dbReference>
<dbReference type="HAMAP" id="MF_00281">
    <property type="entry name" value="Phe_tRNA_synth_alpha1"/>
    <property type="match status" value="1"/>
</dbReference>
<dbReference type="InterPro" id="IPR006195">
    <property type="entry name" value="aa-tRNA-synth_II"/>
</dbReference>
<dbReference type="InterPro" id="IPR045864">
    <property type="entry name" value="aa-tRNA-synth_II/BPL/LPL"/>
</dbReference>
<dbReference type="InterPro" id="IPR004529">
    <property type="entry name" value="Phe-tRNA-synth_IIc_asu"/>
</dbReference>
<dbReference type="InterPro" id="IPR022911">
    <property type="entry name" value="Phe_tRNA_ligase_alpha1_bac"/>
</dbReference>
<dbReference type="InterPro" id="IPR002319">
    <property type="entry name" value="Phenylalanyl-tRNA_Synthase"/>
</dbReference>
<dbReference type="NCBIfam" id="TIGR00468">
    <property type="entry name" value="pheS"/>
    <property type="match status" value="1"/>
</dbReference>
<dbReference type="PANTHER" id="PTHR11538:SF41">
    <property type="entry name" value="PHENYLALANINE--TRNA LIGASE, MITOCHONDRIAL"/>
    <property type="match status" value="1"/>
</dbReference>
<dbReference type="PANTHER" id="PTHR11538">
    <property type="entry name" value="PHENYLALANYL-TRNA SYNTHETASE"/>
    <property type="match status" value="1"/>
</dbReference>
<dbReference type="Pfam" id="PF01409">
    <property type="entry name" value="tRNA-synt_2d"/>
    <property type="match status" value="1"/>
</dbReference>
<dbReference type="SUPFAM" id="SSF55681">
    <property type="entry name" value="Class II aaRS and biotin synthetases"/>
    <property type="match status" value="1"/>
</dbReference>
<dbReference type="PROSITE" id="PS50862">
    <property type="entry name" value="AA_TRNA_LIGASE_II"/>
    <property type="match status" value="1"/>
</dbReference>
<gene>
    <name type="primary">pheS</name>
    <name type="ordered locus">MG194</name>
</gene>
<organism>
    <name type="scientific">Mycoplasma genitalium (strain ATCC 33530 / DSM 19775 / NCTC 10195 / G37)</name>
    <name type="common">Mycoplasmoides genitalium</name>
    <dbReference type="NCBI Taxonomy" id="243273"/>
    <lineage>
        <taxon>Bacteria</taxon>
        <taxon>Bacillati</taxon>
        <taxon>Mycoplasmatota</taxon>
        <taxon>Mycoplasmoidales</taxon>
        <taxon>Mycoplasmoidaceae</taxon>
        <taxon>Mycoplasmoides</taxon>
    </lineage>
</organism>
<keyword id="KW-0030">Aminoacyl-tRNA synthetase</keyword>
<keyword id="KW-0067">ATP-binding</keyword>
<keyword id="KW-0963">Cytoplasm</keyword>
<keyword id="KW-0436">Ligase</keyword>
<keyword id="KW-0460">Magnesium</keyword>
<keyword id="KW-0479">Metal-binding</keyword>
<keyword id="KW-0547">Nucleotide-binding</keyword>
<keyword id="KW-0648">Protein biosynthesis</keyword>
<keyword id="KW-1185">Reference proteome</keyword>
<reference key="1">
    <citation type="journal article" date="1995" name="Science">
        <title>The minimal gene complement of Mycoplasma genitalium.</title>
        <authorList>
            <person name="Fraser C.M."/>
            <person name="Gocayne J.D."/>
            <person name="White O."/>
            <person name="Adams M.D."/>
            <person name="Clayton R.A."/>
            <person name="Fleischmann R.D."/>
            <person name="Bult C.J."/>
            <person name="Kerlavage A.R."/>
            <person name="Sutton G.G."/>
            <person name="Kelley J.M."/>
            <person name="Fritchman J.L."/>
            <person name="Weidman J.F."/>
            <person name="Small K.V."/>
            <person name="Sandusky M."/>
            <person name="Fuhrmann J.L."/>
            <person name="Nguyen D.T."/>
            <person name="Utterback T.R."/>
            <person name="Saudek D.M."/>
            <person name="Phillips C.A."/>
            <person name="Merrick J.M."/>
            <person name="Tomb J.-F."/>
            <person name="Dougherty B.A."/>
            <person name="Bott K.F."/>
            <person name="Hu P.-C."/>
            <person name="Lucier T.S."/>
            <person name="Peterson S.N."/>
            <person name="Smith H.O."/>
            <person name="Hutchison C.A. III"/>
            <person name="Venter J.C."/>
        </authorList>
    </citation>
    <scope>NUCLEOTIDE SEQUENCE [LARGE SCALE GENOMIC DNA]</scope>
    <source>
        <strain>ATCC 33530 / DSM 19775 / NCTC 10195 / G37</strain>
    </source>
</reference>
<reference key="2">
    <citation type="journal article" date="1993" name="J. Bacteriol.">
        <title>A survey of the Mycoplasma genitalium genome by using random sequencing.</title>
        <authorList>
            <person name="Peterson S.N."/>
            <person name="Hu P.-C."/>
            <person name="Bott K.F."/>
            <person name="Hutchison C.A. III"/>
        </authorList>
    </citation>
    <scope>NUCLEOTIDE SEQUENCE [GENOMIC DNA] OF 66-119 AND 232-335</scope>
    <source>
        <strain>ATCC 33530 / DSM 19775 / NCTC 10195 / G37</strain>
    </source>
</reference>
<proteinExistence type="inferred from homology"/>
<accession>P47436</accession>
<accession>Q49515</accession>
<feature type="chain" id="PRO_0000126729" description="Phenylalanine--tRNA ligase alpha subunit">
    <location>
        <begin position="1"/>
        <end position="341"/>
    </location>
</feature>
<feature type="binding site" evidence="1">
    <location>
        <position position="254"/>
    </location>
    <ligand>
        <name>Mg(2+)</name>
        <dbReference type="ChEBI" id="CHEBI:18420"/>
        <note>shared with beta subunit</note>
    </ligand>
</feature>
<feature type="sequence conflict" description="In Ref. 2." evidence="2" ref="2">
    <original>MITHFFG</original>
    <variation>YDHPFLW</variation>
    <location>
        <begin position="232"/>
        <end position="238"/>
    </location>
</feature>
<feature type="sequence conflict" description="In Ref. 2." evidence="2" ref="2">
    <original>DIRDFYDNNFK</original>
    <variation>VYLIFMITTLS</variation>
    <location>
        <begin position="324"/>
        <end position="334"/>
    </location>
</feature>
<name>SYFA_MYCGE</name>
<sequence length="341" mass="38982">MIDQNKLITKWKKAFAKAKNLTTLVNLKNTLHNSDLKPLLQKIKTATKLSEKSSLGKLYQSLDIQLTDLLTSYKKTFEINNQVSQKPSLDVMLPATEFTNGSNNALYQVIDNLVEYFKSFLFTINFDSELTSISDCFDLLNIPKDHSSRNESDSFYIDKTSLLRTHCTATTLKAVRTSKKTNNPDIRVVSLGAVFRNDSDDATHSHQFTQLDFMWIKKGLSLANLKWFINNMITHFFGENTFTRFRLSHFPFTEPSFEIDIRCWLCQNGCSICKQTKWIEILGAGIIHPQVMNNMGIGDTENITGIAAGIGIERLAMLKYGIDDIRDFYDNNFKFLTQFTD</sequence>